<gene>
    <name evidence="1" type="primary">leuA</name>
    <name type="ordered locus">SynRCC307_0746</name>
</gene>
<name>LEU1_SYNR3</name>
<accession>A5GRZ0</accession>
<dbReference type="EC" id="2.3.3.13" evidence="1"/>
<dbReference type="EMBL" id="CT978603">
    <property type="protein sequence ID" value="CAK27649.1"/>
    <property type="molecule type" value="Genomic_DNA"/>
</dbReference>
<dbReference type="SMR" id="A5GRZ0"/>
<dbReference type="STRING" id="316278.SynRCC307_0746"/>
<dbReference type="KEGG" id="syr:SynRCC307_0746"/>
<dbReference type="eggNOG" id="COG0119">
    <property type="taxonomic scope" value="Bacteria"/>
</dbReference>
<dbReference type="HOGENOM" id="CLU_022158_0_1_3"/>
<dbReference type="OrthoDB" id="9804858at2"/>
<dbReference type="UniPathway" id="UPA00048">
    <property type="reaction ID" value="UER00070"/>
</dbReference>
<dbReference type="Proteomes" id="UP000001115">
    <property type="component" value="Chromosome"/>
</dbReference>
<dbReference type="GO" id="GO:0005737">
    <property type="term" value="C:cytoplasm"/>
    <property type="evidence" value="ECO:0007669"/>
    <property type="project" value="UniProtKB-SubCell"/>
</dbReference>
<dbReference type="GO" id="GO:0003852">
    <property type="term" value="F:2-isopropylmalate synthase activity"/>
    <property type="evidence" value="ECO:0007669"/>
    <property type="project" value="UniProtKB-UniRule"/>
</dbReference>
<dbReference type="GO" id="GO:0003985">
    <property type="term" value="F:acetyl-CoA C-acetyltransferase activity"/>
    <property type="evidence" value="ECO:0007669"/>
    <property type="project" value="UniProtKB-UniRule"/>
</dbReference>
<dbReference type="GO" id="GO:0030145">
    <property type="term" value="F:manganese ion binding"/>
    <property type="evidence" value="ECO:0007669"/>
    <property type="project" value="UniProtKB-UniRule"/>
</dbReference>
<dbReference type="GO" id="GO:0009098">
    <property type="term" value="P:L-leucine biosynthetic process"/>
    <property type="evidence" value="ECO:0007669"/>
    <property type="project" value="UniProtKB-UniRule"/>
</dbReference>
<dbReference type="CDD" id="cd07940">
    <property type="entry name" value="DRE_TIM_IPMS"/>
    <property type="match status" value="1"/>
</dbReference>
<dbReference type="FunFam" id="1.10.238.260:FF:000001">
    <property type="entry name" value="2-isopropylmalate synthase"/>
    <property type="match status" value="1"/>
</dbReference>
<dbReference type="FunFam" id="3.20.20.70:FF:000010">
    <property type="entry name" value="2-isopropylmalate synthase"/>
    <property type="match status" value="1"/>
</dbReference>
<dbReference type="Gene3D" id="1.10.238.260">
    <property type="match status" value="1"/>
</dbReference>
<dbReference type="Gene3D" id="3.30.160.740">
    <property type="match status" value="1"/>
</dbReference>
<dbReference type="Gene3D" id="3.20.20.70">
    <property type="entry name" value="Aldolase class I"/>
    <property type="match status" value="1"/>
</dbReference>
<dbReference type="HAMAP" id="MF_01025">
    <property type="entry name" value="LeuA_type1"/>
    <property type="match status" value="1"/>
</dbReference>
<dbReference type="InterPro" id="IPR050073">
    <property type="entry name" value="2-IPM_HCS-like"/>
</dbReference>
<dbReference type="InterPro" id="IPR013709">
    <property type="entry name" value="2-isopropylmalate_synth_dimer"/>
</dbReference>
<dbReference type="InterPro" id="IPR002034">
    <property type="entry name" value="AIPM/Hcit_synth_CS"/>
</dbReference>
<dbReference type="InterPro" id="IPR013785">
    <property type="entry name" value="Aldolase_TIM"/>
</dbReference>
<dbReference type="InterPro" id="IPR054691">
    <property type="entry name" value="LeuA/HCS_post-cat"/>
</dbReference>
<dbReference type="InterPro" id="IPR036230">
    <property type="entry name" value="LeuA_allosteric_dom_sf"/>
</dbReference>
<dbReference type="InterPro" id="IPR005671">
    <property type="entry name" value="LeuA_bact_synth"/>
</dbReference>
<dbReference type="InterPro" id="IPR000891">
    <property type="entry name" value="PYR_CT"/>
</dbReference>
<dbReference type="NCBIfam" id="TIGR00973">
    <property type="entry name" value="leuA_bact"/>
    <property type="match status" value="1"/>
</dbReference>
<dbReference type="NCBIfam" id="NF002086">
    <property type="entry name" value="PRK00915.1-3"/>
    <property type="match status" value="1"/>
</dbReference>
<dbReference type="PANTHER" id="PTHR10277:SF9">
    <property type="entry name" value="2-ISOPROPYLMALATE SYNTHASE 1, CHLOROPLASTIC-RELATED"/>
    <property type="match status" value="1"/>
</dbReference>
<dbReference type="PANTHER" id="PTHR10277">
    <property type="entry name" value="HOMOCITRATE SYNTHASE-RELATED"/>
    <property type="match status" value="1"/>
</dbReference>
<dbReference type="Pfam" id="PF22617">
    <property type="entry name" value="HCS_D2"/>
    <property type="match status" value="1"/>
</dbReference>
<dbReference type="Pfam" id="PF00682">
    <property type="entry name" value="HMGL-like"/>
    <property type="match status" value="1"/>
</dbReference>
<dbReference type="Pfam" id="PF08502">
    <property type="entry name" value="LeuA_dimer"/>
    <property type="match status" value="1"/>
</dbReference>
<dbReference type="SMART" id="SM00917">
    <property type="entry name" value="LeuA_dimer"/>
    <property type="match status" value="1"/>
</dbReference>
<dbReference type="SUPFAM" id="SSF110921">
    <property type="entry name" value="2-isopropylmalate synthase LeuA, allosteric (dimerisation) domain"/>
    <property type="match status" value="1"/>
</dbReference>
<dbReference type="SUPFAM" id="SSF51569">
    <property type="entry name" value="Aldolase"/>
    <property type="match status" value="1"/>
</dbReference>
<dbReference type="PROSITE" id="PS00815">
    <property type="entry name" value="AIPM_HOMOCIT_SYNTH_1"/>
    <property type="match status" value="1"/>
</dbReference>
<dbReference type="PROSITE" id="PS00816">
    <property type="entry name" value="AIPM_HOMOCIT_SYNTH_2"/>
    <property type="match status" value="1"/>
</dbReference>
<dbReference type="PROSITE" id="PS50991">
    <property type="entry name" value="PYR_CT"/>
    <property type="match status" value="1"/>
</dbReference>
<proteinExistence type="inferred from homology"/>
<protein>
    <recommendedName>
        <fullName evidence="1">2-isopropylmalate synthase</fullName>
        <ecNumber evidence="1">2.3.3.13</ecNumber>
    </recommendedName>
    <alternativeName>
        <fullName evidence="1">Alpha-IPM synthase</fullName>
    </alternativeName>
    <alternativeName>
        <fullName evidence="1">Alpha-isopropylmalate synthase</fullName>
    </alternativeName>
</protein>
<evidence type="ECO:0000255" key="1">
    <source>
        <dbReference type="HAMAP-Rule" id="MF_01025"/>
    </source>
</evidence>
<keyword id="KW-0028">Amino-acid biosynthesis</keyword>
<keyword id="KW-0100">Branched-chain amino acid biosynthesis</keyword>
<keyword id="KW-0963">Cytoplasm</keyword>
<keyword id="KW-0432">Leucine biosynthesis</keyword>
<keyword id="KW-0464">Manganese</keyword>
<keyword id="KW-0479">Metal-binding</keyword>
<keyword id="KW-1185">Reference proteome</keyword>
<keyword id="KW-0808">Transferase</keyword>
<sequence>MARDPGRVLIFDTTLRDGEQSPGASLNLDEKLAIAQQLARLRVDIIEAGFPFASPGDFDAVQTIARQVGRPDGPVICGLARATRGDIKACADAVAPAANQRIHTFLATSDIHLEHKLRKSRAEVLQIVPEMVAYARSLVDDVEFSCEDAGRSDPEFMYQVIEAAIEAGATTINIPDTVGYSTPAEFGALIAGIDAHVPNIGQAVISVHGHNDLGLAVANFLEAVKNGARQLECTINGIGERAGNASLEELVMALHVRRSYFNGYLGRAEDSSEPLTGIQTEEIYKTSRLVSNLTGMAVQPNKAIVGANAFAHESGIHQDGVLKNRLTYEIIDARTIGLTDNRISLGKLSGRSAVRARLEELGYQLDGDDLNDAFARFKELADRKREITDRDLEAIVRQNAQQIEAYYQLAGVQVSCGRDLRATATVTLRTSDGEECSQAAIGTGPVDAVCQALNGLVQVPNELVEFSVKSVTEGIDAMGEVTIRLRQDGRLYSGHAADTDVVVAAAQAFVNALNRLVSGQKHSPLHPQRAPLPAPAL</sequence>
<comment type="function">
    <text evidence="1">Catalyzes the condensation of the acetyl group of acetyl-CoA with 3-methyl-2-oxobutanoate (2-ketoisovalerate) to form 3-carboxy-3-hydroxy-4-methylpentanoate (2-isopropylmalate).</text>
</comment>
<comment type="catalytic activity">
    <reaction evidence="1">
        <text>3-methyl-2-oxobutanoate + acetyl-CoA + H2O = (2S)-2-isopropylmalate + CoA + H(+)</text>
        <dbReference type="Rhea" id="RHEA:21524"/>
        <dbReference type="ChEBI" id="CHEBI:1178"/>
        <dbReference type="ChEBI" id="CHEBI:11851"/>
        <dbReference type="ChEBI" id="CHEBI:15377"/>
        <dbReference type="ChEBI" id="CHEBI:15378"/>
        <dbReference type="ChEBI" id="CHEBI:57287"/>
        <dbReference type="ChEBI" id="CHEBI:57288"/>
        <dbReference type="EC" id="2.3.3.13"/>
    </reaction>
</comment>
<comment type="cofactor">
    <cofactor evidence="1">
        <name>Mn(2+)</name>
        <dbReference type="ChEBI" id="CHEBI:29035"/>
    </cofactor>
</comment>
<comment type="pathway">
    <text evidence="1">Amino-acid biosynthesis; L-leucine biosynthesis; L-leucine from 3-methyl-2-oxobutanoate: step 1/4.</text>
</comment>
<comment type="subunit">
    <text evidence="1">Homodimer.</text>
</comment>
<comment type="subcellular location">
    <subcellularLocation>
        <location evidence="1">Cytoplasm</location>
    </subcellularLocation>
</comment>
<comment type="similarity">
    <text evidence="1">Belongs to the alpha-IPM synthase/homocitrate synthase family. LeuA type 1 subfamily.</text>
</comment>
<feature type="chain" id="PRO_1000149315" description="2-isopropylmalate synthase">
    <location>
        <begin position="1"/>
        <end position="537"/>
    </location>
</feature>
<feature type="domain" description="Pyruvate carboxyltransferase" evidence="1">
    <location>
        <begin position="8"/>
        <end position="269"/>
    </location>
</feature>
<feature type="region of interest" description="Regulatory domain" evidence="1">
    <location>
        <begin position="408"/>
        <end position="537"/>
    </location>
</feature>
<feature type="binding site" evidence="1">
    <location>
        <position position="17"/>
    </location>
    <ligand>
        <name>Mn(2+)</name>
        <dbReference type="ChEBI" id="CHEBI:29035"/>
    </ligand>
</feature>
<feature type="binding site" evidence="1">
    <location>
        <position position="208"/>
    </location>
    <ligand>
        <name>Mn(2+)</name>
        <dbReference type="ChEBI" id="CHEBI:29035"/>
    </ligand>
</feature>
<feature type="binding site" evidence="1">
    <location>
        <position position="210"/>
    </location>
    <ligand>
        <name>Mn(2+)</name>
        <dbReference type="ChEBI" id="CHEBI:29035"/>
    </ligand>
</feature>
<feature type="binding site" evidence="1">
    <location>
        <position position="244"/>
    </location>
    <ligand>
        <name>Mn(2+)</name>
        <dbReference type="ChEBI" id="CHEBI:29035"/>
    </ligand>
</feature>
<reference key="1">
    <citation type="submission" date="2006-05" db="EMBL/GenBank/DDBJ databases">
        <authorList>
            <consortium name="Genoscope"/>
        </authorList>
    </citation>
    <scope>NUCLEOTIDE SEQUENCE [LARGE SCALE GENOMIC DNA]</scope>
    <source>
        <strain>RCC307</strain>
    </source>
</reference>
<organism>
    <name type="scientific">Synechococcus sp. (strain RCC307)</name>
    <dbReference type="NCBI Taxonomy" id="316278"/>
    <lineage>
        <taxon>Bacteria</taxon>
        <taxon>Bacillati</taxon>
        <taxon>Cyanobacteriota</taxon>
        <taxon>Cyanophyceae</taxon>
        <taxon>Synechococcales</taxon>
        <taxon>Synechococcaceae</taxon>
        <taxon>Synechococcus</taxon>
    </lineage>
</organism>